<organism>
    <name type="scientific">Burkholderia pseudomallei (strain 668)</name>
    <dbReference type="NCBI Taxonomy" id="320373"/>
    <lineage>
        <taxon>Bacteria</taxon>
        <taxon>Pseudomonadati</taxon>
        <taxon>Pseudomonadota</taxon>
        <taxon>Betaproteobacteria</taxon>
        <taxon>Burkholderiales</taxon>
        <taxon>Burkholderiaceae</taxon>
        <taxon>Burkholderia</taxon>
        <taxon>pseudomallei group</taxon>
    </lineage>
</organism>
<comment type="function">
    <text evidence="1">Catalyzes the stereoinversion of LL-2,6-diaminopimelate (L,L-DAP) to meso-diaminopimelate (meso-DAP), a precursor of L-lysine and an essential component of the bacterial peptidoglycan.</text>
</comment>
<comment type="catalytic activity">
    <reaction evidence="1">
        <text>(2S,6S)-2,6-diaminopimelate = meso-2,6-diaminopimelate</text>
        <dbReference type="Rhea" id="RHEA:15393"/>
        <dbReference type="ChEBI" id="CHEBI:57609"/>
        <dbReference type="ChEBI" id="CHEBI:57791"/>
        <dbReference type="EC" id="5.1.1.7"/>
    </reaction>
</comment>
<comment type="pathway">
    <text evidence="1">Amino-acid biosynthesis; L-lysine biosynthesis via DAP pathway; DL-2,6-diaminopimelate from LL-2,6-diaminopimelate: step 1/1.</text>
</comment>
<comment type="subunit">
    <text evidence="1">Homodimer.</text>
</comment>
<comment type="subcellular location">
    <subcellularLocation>
        <location evidence="1">Cytoplasm</location>
    </subcellularLocation>
</comment>
<comment type="similarity">
    <text evidence="1">Belongs to the diaminopimelate epimerase family.</text>
</comment>
<dbReference type="EC" id="5.1.1.7" evidence="1"/>
<dbReference type="EMBL" id="CP000570">
    <property type="protein sequence ID" value="ABN83064.1"/>
    <property type="molecule type" value="Genomic_DNA"/>
</dbReference>
<dbReference type="RefSeq" id="WP_011850911.1">
    <property type="nucleotide sequence ID" value="NC_009074.1"/>
</dbReference>
<dbReference type="SMR" id="A3N4H9"/>
<dbReference type="KEGG" id="bpd:BURPS668_0197"/>
<dbReference type="HOGENOM" id="CLU_053306_1_1_4"/>
<dbReference type="UniPathway" id="UPA00034">
    <property type="reaction ID" value="UER00025"/>
</dbReference>
<dbReference type="GO" id="GO:0005829">
    <property type="term" value="C:cytosol"/>
    <property type="evidence" value="ECO:0007669"/>
    <property type="project" value="TreeGrafter"/>
</dbReference>
<dbReference type="GO" id="GO:0008837">
    <property type="term" value="F:diaminopimelate epimerase activity"/>
    <property type="evidence" value="ECO:0007669"/>
    <property type="project" value="UniProtKB-UniRule"/>
</dbReference>
<dbReference type="GO" id="GO:0009089">
    <property type="term" value="P:lysine biosynthetic process via diaminopimelate"/>
    <property type="evidence" value="ECO:0007669"/>
    <property type="project" value="UniProtKB-UniRule"/>
</dbReference>
<dbReference type="FunFam" id="3.10.310.10:FF:000001">
    <property type="entry name" value="Diaminopimelate epimerase"/>
    <property type="match status" value="1"/>
</dbReference>
<dbReference type="Gene3D" id="3.10.310.10">
    <property type="entry name" value="Diaminopimelate Epimerase, Chain A, domain 1"/>
    <property type="match status" value="2"/>
</dbReference>
<dbReference type="HAMAP" id="MF_00197">
    <property type="entry name" value="DAP_epimerase"/>
    <property type="match status" value="1"/>
</dbReference>
<dbReference type="InterPro" id="IPR018510">
    <property type="entry name" value="DAP_epimerase_AS"/>
</dbReference>
<dbReference type="InterPro" id="IPR001653">
    <property type="entry name" value="DAP_epimerase_DapF"/>
</dbReference>
<dbReference type="NCBIfam" id="TIGR00652">
    <property type="entry name" value="DapF"/>
    <property type="match status" value="1"/>
</dbReference>
<dbReference type="PANTHER" id="PTHR31689:SF0">
    <property type="entry name" value="DIAMINOPIMELATE EPIMERASE"/>
    <property type="match status" value="1"/>
</dbReference>
<dbReference type="PANTHER" id="PTHR31689">
    <property type="entry name" value="DIAMINOPIMELATE EPIMERASE, CHLOROPLASTIC"/>
    <property type="match status" value="1"/>
</dbReference>
<dbReference type="Pfam" id="PF01678">
    <property type="entry name" value="DAP_epimerase"/>
    <property type="match status" value="2"/>
</dbReference>
<dbReference type="SUPFAM" id="SSF54506">
    <property type="entry name" value="Diaminopimelate epimerase-like"/>
    <property type="match status" value="1"/>
</dbReference>
<dbReference type="PROSITE" id="PS01326">
    <property type="entry name" value="DAP_EPIMERASE"/>
    <property type="match status" value="1"/>
</dbReference>
<sequence>MKLSFTKMHGAGNDFVVLDGYTRALPPLTGAQVRALADRHFGIGADQLLLVEKPTVDGADFKYRIFNCDGGEVEHCGNGARCFVKFVRDHGLTGKASVRVEVKHGVITLTMQDNGEVVVDMGAPVFEPARVPFDASGLDGRREGADTLWPLPVNGVTRWISVVSMGNPHAVQIVDDAEAFAVRVDGPAIERDPRFPQRVNAGFMQVVSRHEVNLRVYERGAGETLACGTGACAAVAAGIRRGRLDSPVTVHTHGGTLTISWNGARDERAPLMMAGPATTVFEGVIELPA</sequence>
<accession>A3N4H9</accession>
<reference key="1">
    <citation type="journal article" date="2010" name="Genome Biol. Evol.">
        <title>Continuing evolution of Burkholderia mallei through genome reduction and large-scale rearrangements.</title>
        <authorList>
            <person name="Losada L."/>
            <person name="Ronning C.M."/>
            <person name="DeShazer D."/>
            <person name="Woods D."/>
            <person name="Fedorova N."/>
            <person name="Kim H.S."/>
            <person name="Shabalina S.A."/>
            <person name="Pearson T.R."/>
            <person name="Brinkac L."/>
            <person name="Tan P."/>
            <person name="Nandi T."/>
            <person name="Crabtree J."/>
            <person name="Badger J."/>
            <person name="Beckstrom-Sternberg S."/>
            <person name="Saqib M."/>
            <person name="Schutzer S.E."/>
            <person name="Keim P."/>
            <person name="Nierman W.C."/>
        </authorList>
    </citation>
    <scope>NUCLEOTIDE SEQUENCE [LARGE SCALE GENOMIC DNA]</scope>
    <source>
        <strain>668</strain>
    </source>
</reference>
<feature type="chain" id="PRO_1000011859" description="Diaminopimelate epimerase">
    <location>
        <begin position="1"/>
        <end position="289"/>
    </location>
</feature>
<feature type="active site" description="Proton donor" evidence="1">
    <location>
        <position position="76"/>
    </location>
</feature>
<feature type="active site" description="Proton acceptor" evidence="1">
    <location>
        <position position="227"/>
    </location>
</feature>
<feature type="binding site" evidence="1">
    <location>
        <position position="13"/>
    </location>
    <ligand>
        <name>substrate</name>
    </ligand>
</feature>
<feature type="binding site" evidence="1">
    <location>
        <position position="47"/>
    </location>
    <ligand>
        <name>substrate</name>
    </ligand>
</feature>
<feature type="binding site" evidence="1">
    <location>
        <position position="67"/>
    </location>
    <ligand>
        <name>substrate</name>
    </ligand>
</feature>
<feature type="binding site" evidence="1">
    <location>
        <begin position="77"/>
        <end position="78"/>
    </location>
    <ligand>
        <name>substrate</name>
    </ligand>
</feature>
<feature type="binding site" evidence="1">
    <location>
        <position position="167"/>
    </location>
    <ligand>
        <name>substrate</name>
    </ligand>
</feature>
<feature type="binding site" evidence="1">
    <location>
        <position position="200"/>
    </location>
    <ligand>
        <name>substrate</name>
    </ligand>
</feature>
<feature type="binding site" evidence="1">
    <location>
        <begin position="218"/>
        <end position="219"/>
    </location>
    <ligand>
        <name>substrate</name>
    </ligand>
</feature>
<feature type="binding site" evidence="1">
    <location>
        <begin position="228"/>
        <end position="229"/>
    </location>
    <ligand>
        <name>substrate</name>
    </ligand>
</feature>
<feature type="site" description="Could be important to modulate the pK values of the two catalytic cysteine residues" evidence="1">
    <location>
        <position position="169"/>
    </location>
</feature>
<feature type="site" description="Could be important to modulate the pK values of the two catalytic cysteine residues" evidence="1">
    <location>
        <position position="218"/>
    </location>
</feature>
<evidence type="ECO:0000255" key="1">
    <source>
        <dbReference type="HAMAP-Rule" id="MF_00197"/>
    </source>
</evidence>
<name>DAPF_BURP6</name>
<protein>
    <recommendedName>
        <fullName evidence="1">Diaminopimelate epimerase</fullName>
        <shortName evidence="1">DAP epimerase</shortName>
        <ecNumber evidence="1">5.1.1.7</ecNumber>
    </recommendedName>
    <alternativeName>
        <fullName evidence="1">PLP-independent amino acid racemase</fullName>
    </alternativeName>
</protein>
<gene>
    <name evidence="1" type="primary">dapF</name>
    <name type="ordered locus">BURPS668_0197</name>
</gene>
<proteinExistence type="inferred from homology"/>
<keyword id="KW-0028">Amino-acid biosynthesis</keyword>
<keyword id="KW-0963">Cytoplasm</keyword>
<keyword id="KW-0413">Isomerase</keyword>
<keyword id="KW-0457">Lysine biosynthesis</keyword>